<feature type="chain" id="PRO_0000192640" description="Chlorosome envelope protein B">
    <location>
        <begin position="1"/>
        <end position="24" status="greater than"/>
    </location>
</feature>
<feature type="non-terminal residue">
    <location>
        <position position="24"/>
    </location>
</feature>
<name>CSMB_PELLU</name>
<protein>
    <recommendedName>
        <fullName>Chlorosome envelope protein B</fullName>
    </recommendedName>
    <alternativeName>
        <fullName>Chlorosome 7.5 kDa protein</fullName>
    </alternativeName>
    <alternativeName>
        <fullName>Gerola-Olson chlorosome protein</fullName>
    </alternativeName>
</protein>
<sequence length="24" mass="2406">SNGSNIDVAGAVNTLVETAGKLFQ</sequence>
<dbReference type="PIR" id="S05565">
    <property type="entry name" value="S05565"/>
</dbReference>
<dbReference type="GO" id="GO:0033105">
    <property type="term" value="C:chlorosome envelope"/>
    <property type="evidence" value="ECO:0007669"/>
    <property type="project" value="UniProtKB-SubCell"/>
</dbReference>
<dbReference type="GO" id="GO:0042314">
    <property type="term" value="F:bacteriochlorophyll binding"/>
    <property type="evidence" value="ECO:0007669"/>
    <property type="project" value="UniProtKB-KW"/>
</dbReference>
<dbReference type="GO" id="GO:0015979">
    <property type="term" value="P:photosynthesis"/>
    <property type="evidence" value="ECO:0007669"/>
    <property type="project" value="UniProtKB-KW"/>
</dbReference>
<gene>
    <name type="primary">csmB</name>
</gene>
<accession>P15526</accession>
<keyword id="KW-0076">Bacteriochlorophyll</keyword>
<keyword id="KW-0148">Chlorophyll</keyword>
<keyword id="KW-0151">Chlorosome</keyword>
<keyword id="KW-0157">Chromophore</keyword>
<keyword id="KW-0903">Direct protein sequencing</keyword>
<keyword id="KW-0602">Photosynthesis</keyword>
<reference key="1">
    <citation type="journal article" date="1988" name="FEBS Lett.">
        <title>The BChlc/e-binding polypeptides from chlorosomes of green photosynthetic bacteria.</title>
        <authorList>
            <person name="Wagner-Huber R."/>
            <person name="Brunisholz R."/>
            <person name="Frank G."/>
            <person name="Zuber H."/>
        </authorList>
    </citation>
    <scope>PROTEIN SEQUENCE</scope>
    <source>
        <strain>2530</strain>
    </source>
</reference>
<comment type="function">
    <text>Component of the photosynthetic apparatus which may bind the chlorosome to the bacteriochlorophyll a protein monolayer.</text>
</comment>
<comment type="subcellular location">
    <subcellularLocation>
        <location>Chlorosome</location>
        <location>Chlorosome envelope</location>
    </subcellularLocation>
</comment>
<comment type="similarity">
    <text evidence="1">Belongs to the CsmB/CsmF family.</text>
</comment>
<organism>
    <name type="scientific">Pelodictyon luteolum</name>
    <dbReference type="NCBI Taxonomy" id="1100"/>
    <lineage>
        <taxon>Bacteria</taxon>
        <taxon>Pseudomonadati</taxon>
        <taxon>Chlorobiota</taxon>
        <taxon>Chlorobiia</taxon>
        <taxon>Chlorobiales</taxon>
        <taxon>Chlorobiaceae</taxon>
        <taxon>Chlorobium/Pelodictyon group</taxon>
        <taxon>Pelodictyon</taxon>
    </lineage>
</organism>
<evidence type="ECO:0000305" key="1"/>
<proteinExistence type="evidence at protein level"/>